<accession>B7NHX1</accession>
<protein>
    <recommendedName>
        <fullName evidence="1">Cell division protein ZapA</fullName>
    </recommendedName>
    <alternativeName>
        <fullName evidence="1">Z ring-associated protein ZapA</fullName>
    </alternativeName>
</protein>
<sequence>MSAQPVDIQIFGRSLRVNCPPDQRDALNQAADDLNQRLQDLKERTRVTNTEQLVFIAALNISYELAQEKAKTRDYAASMEQRIRMLQQTIEQALLEQGRITEKTNQNFE</sequence>
<proteinExistence type="inferred from homology"/>
<name>ZAPA_ECO7I</name>
<dbReference type="EMBL" id="CU928164">
    <property type="protein sequence ID" value="CAR19443.1"/>
    <property type="molecule type" value="Genomic_DNA"/>
</dbReference>
<dbReference type="RefSeq" id="WP_001276008.1">
    <property type="nucleotide sequence ID" value="NC_011750.1"/>
</dbReference>
<dbReference type="RefSeq" id="YP_002409247.1">
    <property type="nucleotide sequence ID" value="NC_011750.1"/>
</dbReference>
<dbReference type="SMR" id="B7NHX1"/>
<dbReference type="STRING" id="585057.ECIAI39_3326"/>
<dbReference type="GeneID" id="93779091"/>
<dbReference type="KEGG" id="ect:ECIAI39_3326"/>
<dbReference type="PATRIC" id="fig|585057.6.peg.3449"/>
<dbReference type="HOGENOM" id="CLU_116623_3_0_6"/>
<dbReference type="Proteomes" id="UP000000749">
    <property type="component" value="Chromosome"/>
</dbReference>
<dbReference type="GO" id="GO:0032153">
    <property type="term" value="C:cell division site"/>
    <property type="evidence" value="ECO:0007669"/>
    <property type="project" value="TreeGrafter"/>
</dbReference>
<dbReference type="GO" id="GO:0030428">
    <property type="term" value="C:cell septum"/>
    <property type="evidence" value="ECO:0007669"/>
    <property type="project" value="TreeGrafter"/>
</dbReference>
<dbReference type="GO" id="GO:0005829">
    <property type="term" value="C:cytosol"/>
    <property type="evidence" value="ECO:0007669"/>
    <property type="project" value="TreeGrafter"/>
</dbReference>
<dbReference type="GO" id="GO:0005886">
    <property type="term" value="C:plasma membrane"/>
    <property type="evidence" value="ECO:0007669"/>
    <property type="project" value="UniProtKB-UniRule"/>
</dbReference>
<dbReference type="GO" id="GO:0000917">
    <property type="term" value="P:division septum assembly"/>
    <property type="evidence" value="ECO:0007669"/>
    <property type="project" value="UniProtKB-KW"/>
</dbReference>
<dbReference type="GO" id="GO:0043093">
    <property type="term" value="P:FtsZ-dependent cytokinesis"/>
    <property type="evidence" value="ECO:0007669"/>
    <property type="project" value="TreeGrafter"/>
</dbReference>
<dbReference type="GO" id="GO:0000921">
    <property type="term" value="P:septin ring assembly"/>
    <property type="evidence" value="ECO:0007669"/>
    <property type="project" value="TreeGrafter"/>
</dbReference>
<dbReference type="FunFam" id="1.20.5.50:FF:000001">
    <property type="entry name" value="Cell division protein ZapA"/>
    <property type="match status" value="1"/>
</dbReference>
<dbReference type="FunFam" id="3.30.160.880:FF:000001">
    <property type="entry name" value="Cell division protein ZapA"/>
    <property type="match status" value="1"/>
</dbReference>
<dbReference type="Gene3D" id="1.20.5.50">
    <property type="match status" value="1"/>
</dbReference>
<dbReference type="Gene3D" id="3.30.160.880">
    <property type="entry name" value="Cell division protein ZapA protomer, N-terminal domain"/>
    <property type="match status" value="1"/>
</dbReference>
<dbReference type="HAMAP" id="MF_02012">
    <property type="entry name" value="ZapA_type1"/>
    <property type="match status" value="1"/>
</dbReference>
<dbReference type="InterPro" id="IPR007838">
    <property type="entry name" value="Cell_div_ZapA-like"/>
</dbReference>
<dbReference type="InterPro" id="IPR036192">
    <property type="entry name" value="Cell_div_ZapA-like_sf"/>
</dbReference>
<dbReference type="InterPro" id="IPR023771">
    <property type="entry name" value="Cell_div_ZapA_eubact"/>
</dbReference>
<dbReference type="InterPro" id="IPR042233">
    <property type="entry name" value="Cell_div_ZapA_N"/>
</dbReference>
<dbReference type="NCBIfam" id="NF008209">
    <property type="entry name" value="PRK10972.1"/>
    <property type="match status" value="1"/>
</dbReference>
<dbReference type="PANTHER" id="PTHR34981">
    <property type="entry name" value="CELL DIVISION PROTEIN ZAPA"/>
    <property type="match status" value="1"/>
</dbReference>
<dbReference type="PANTHER" id="PTHR34981:SF1">
    <property type="entry name" value="CELL DIVISION PROTEIN ZAPA"/>
    <property type="match status" value="1"/>
</dbReference>
<dbReference type="Pfam" id="PF05164">
    <property type="entry name" value="ZapA"/>
    <property type="match status" value="1"/>
</dbReference>
<dbReference type="SUPFAM" id="SSF102829">
    <property type="entry name" value="Cell division protein ZapA-like"/>
    <property type="match status" value="1"/>
</dbReference>
<comment type="function">
    <text evidence="1">Activator of cell division through the inhibition of FtsZ GTPase activity, therefore promoting FtsZ assembly into bundles of protofilaments necessary for the formation of the division Z ring. It is recruited early at mid-cell but it is not essential for cell division.</text>
</comment>
<comment type="subunit">
    <text evidence="1">Homodimer. Interacts with FtsZ.</text>
</comment>
<comment type="subcellular location">
    <subcellularLocation>
        <location evidence="1">Cytoplasm</location>
    </subcellularLocation>
    <text evidence="1">Localizes at mid-cell.</text>
</comment>
<comment type="similarity">
    <text evidence="1">Belongs to the ZapA family. Type 1 subfamily.</text>
</comment>
<keyword id="KW-0131">Cell cycle</keyword>
<keyword id="KW-0132">Cell division</keyword>
<keyword id="KW-0175">Coiled coil</keyword>
<keyword id="KW-0963">Cytoplasm</keyword>
<keyword id="KW-0717">Septation</keyword>
<feature type="chain" id="PRO_1000189510" description="Cell division protein ZapA">
    <location>
        <begin position="1"/>
        <end position="109"/>
    </location>
</feature>
<feature type="coiled-coil region" evidence="1">
    <location>
        <begin position="21"/>
        <end position="99"/>
    </location>
</feature>
<evidence type="ECO:0000255" key="1">
    <source>
        <dbReference type="HAMAP-Rule" id="MF_02012"/>
    </source>
</evidence>
<organism>
    <name type="scientific">Escherichia coli O7:K1 (strain IAI39 / ExPEC)</name>
    <dbReference type="NCBI Taxonomy" id="585057"/>
    <lineage>
        <taxon>Bacteria</taxon>
        <taxon>Pseudomonadati</taxon>
        <taxon>Pseudomonadota</taxon>
        <taxon>Gammaproteobacteria</taxon>
        <taxon>Enterobacterales</taxon>
        <taxon>Enterobacteriaceae</taxon>
        <taxon>Escherichia</taxon>
    </lineage>
</organism>
<reference key="1">
    <citation type="journal article" date="2009" name="PLoS Genet.">
        <title>Organised genome dynamics in the Escherichia coli species results in highly diverse adaptive paths.</title>
        <authorList>
            <person name="Touchon M."/>
            <person name="Hoede C."/>
            <person name="Tenaillon O."/>
            <person name="Barbe V."/>
            <person name="Baeriswyl S."/>
            <person name="Bidet P."/>
            <person name="Bingen E."/>
            <person name="Bonacorsi S."/>
            <person name="Bouchier C."/>
            <person name="Bouvet O."/>
            <person name="Calteau A."/>
            <person name="Chiapello H."/>
            <person name="Clermont O."/>
            <person name="Cruveiller S."/>
            <person name="Danchin A."/>
            <person name="Diard M."/>
            <person name="Dossat C."/>
            <person name="Karoui M.E."/>
            <person name="Frapy E."/>
            <person name="Garry L."/>
            <person name="Ghigo J.M."/>
            <person name="Gilles A.M."/>
            <person name="Johnson J."/>
            <person name="Le Bouguenec C."/>
            <person name="Lescat M."/>
            <person name="Mangenot S."/>
            <person name="Martinez-Jehanne V."/>
            <person name="Matic I."/>
            <person name="Nassif X."/>
            <person name="Oztas S."/>
            <person name="Petit M.A."/>
            <person name="Pichon C."/>
            <person name="Rouy Z."/>
            <person name="Ruf C.S."/>
            <person name="Schneider D."/>
            <person name="Tourret J."/>
            <person name="Vacherie B."/>
            <person name="Vallenet D."/>
            <person name="Medigue C."/>
            <person name="Rocha E.P.C."/>
            <person name="Denamur E."/>
        </authorList>
    </citation>
    <scope>NUCLEOTIDE SEQUENCE [LARGE SCALE GENOMIC DNA]</scope>
    <source>
        <strain>IAI39 / ExPEC</strain>
    </source>
</reference>
<gene>
    <name evidence="1" type="primary">zapA</name>
    <name type="ordered locus">ECIAI39_3326</name>
</gene>